<dbReference type="EMBL" id="AM260522">
    <property type="protein sequence ID" value="CAJ99129.1"/>
    <property type="molecule type" value="Genomic_DNA"/>
</dbReference>
<dbReference type="RefSeq" id="WP_011577244.1">
    <property type="nucleotide sequence ID" value="NC_008229.1"/>
</dbReference>
<dbReference type="SMR" id="Q17YZ7"/>
<dbReference type="STRING" id="382638.Hac_0286"/>
<dbReference type="GeneID" id="31757801"/>
<dbReference type="KEGG" id="hac:Hac_0286"/>
<dbReference type="eggNOG" id="COG0052">
    <property type="taxonomic scope" value="Bacteria"/>
</dbReference>
<dbReference type="HOGENOM" id="CLU_040318_1_2_7"/>
<dbReference type="OrthoDB" id="9808036at2"/>
<dbReference type="BioCyc" id="HACI382638:HAC_RS01275-MONOMER"/>
<dbReference type="Proteomes" id="UP000000775">
    <property type="component" value="Chromosome"/>
</dbReference>
<dbReference type="GO" id="GO:0022627">
    <property type="term" value="C:cytosolic small ribosomal subunit"/>
    <property type="evidence" value="ECO:0007669"/>
    <property type="project" value="TreeGrafter"/>
</dbReference>
<dbReference type="GO" id="GO:0003735">
    <property type="term" value="F:structural constituent of ribosome"/>
    <property type="evidence" value="ECO:0007669"/>
    <property type="project" value="InterPro"/>
</dbReference>
<dbReference type="GO" id="GO:0006412">
    <property type="term" value="P:translation"/>
    <property type="evidence" value="ECO:0007669"/>
    <property type="project" value="UniProtKB-UniRule"/>
</dbReference>
<dbReference type="CDD" id="cd01425">
    <property type="entry name" value="RPS2"/>
    <property type="match status" value="1"/>
</dbReference>
<dbReference type="FunFam" id="1.10.287.610:FF:000001">
    <property type="entry name" value="30S ribosomal protein S2"/>
    <property type="match status" value="1"/>
</dbReference>
<dbReference type="Gene3D" id="3.40.50.10490">
    <property type="entry name" value="Glucose-6-phosphate isomerase like protein, domain 1"/>
    <property type="match status" value="1"/>
</dbReference>
<dbReference type="Gene3D" id="1.10.287.610">
    <property type="entry name" value="Helix hairpin bin"/>
    <property type="match status" value="1"/>
</dbReference>
<dbReference type="HAMAP" id="MF_00291_B">
    <property type="entry name" value="Ribosomal_uS2_B"/>
    <property type="match status" value="1"/>
</dbReference>
<dbReference type="InterPro" id="IPR001865">
    <property type="entry name" value="Ribosomal_uS2"/>
</dbReference>
<dbReference type="InterPro" id="IPR005706">
    <property type="entry name" value="Ribosomal_uS2_bac/mit/plastid"/>
</dbReference>
<dbReference type="InterPro" id="IPR018130">
    <property type="entry name" value="Ribosomal_uS2_CS"/>
</dbReference>
<dbReference type="InterPro" id="IPR023591">
    <property type="entry name" value="Ribosomal_uS2_flav_dom_sf"/>
</dbReference>
<dbReference type="NCBIfam" id="TIGR01011">
    <property type="entry name" value="rpsB_bact"/>
    <property type="match status" value="1"/>
</dbReference>
<dbReference type="PANTHER" id="PTHR12534">
    <property type="entry name" value="30S RIBOSOMAL PROTEIN S2 PROKARYOTIC AND ORGANELLAR"/>
    <property type="match status" value="1"/>
</dbReference>
<dbReference type="PANTHER" id="PTHR12534:SF0">
    <property type="entry name" value="SMALL RIBOSOMAL SUBUNIT PROTEIN US2M"/>
    <property type="match status" value="1"/>
</dbReference>
<dbReference type="Pfam" id="PF00318">
    <property type="entry name" value="Ribosomal_S2"/>
    <property type="match status" value="1"/>
</dbReference>
<dbReference type="PRINTS" id="PR00395">
    <property type="entry name" value="RIBOSOMALS2"/>
</dbReference>
<dbReference type="SUPFAM" id="SSF52313">
    <property type="entry name" value="Ribosomal protein S2"/>
    <property type="match status" value="1"/>
</dbReference>
<dbReference type="PROSITE" id="PS00962">
    <property type="entry name" value="RIBOSOMAL_S2_1"/>
    <property type="match status" value="1"/>
</dbReference>
<dbReference type="PROSITE" id="PS00963">
    <property type="entry name" value="RIBOSOMAL_S2_2"/>
    <property type="match status" value="1"/>
</dbReference>
<feature type="chain" id="PRO_1000003976" description="Small ribosomal subunit protein uS2">
    <location>
        <begin position="1"/>
        <end position="246"/>
    </location>
</feature>
<accession>Q17YZ7</accession>
<reference key="1">
    <citation type="journal article" date="2006" name="PLoS Genet.">
        <title>Who ate whom? Adaptive Helicobacter genomic changes that accompanied a host jump from early humans to large felines.</title>
        <authorList>
            <person name="Eppinger M."/>
            <person name="Baar C."/>
            <person name="Linz B."/>
            <person name="Raddatz G."/>
            <person name="Lanz C."/>
            <person name="Keller H."/>
            <person name="Morelli G."/>
            <person name="Gressmann H."/>
            <person name="Achtman M."/>
            <person name="Schuster S.C."/>
        </authorList>
    </citation>
    <scope>NUCLEOTIDE SEQUENCE [LARGE SCALE GENOMIC DNA]</scope>
    <source>
        <strain>Sheeba</strain>
    </source>
</reference>
<organism>
    <name type="scientific">Helicobacter acinonychis (strain Sheeba)</name>
    <dbReference type="NCBI Taxonomy" id="382638"/>
    <lineage>
        <taxon>Bacteria</taxon>
        <taxon>Pseudomonadati</taxon>
        <taxon>Campylobacterota</taxon>
        <taxon>Epsilonproteobacteria</taxon>
        <taxon>Campylobacterales</taxon>
        <taxon>Helicobacteraceae</taxon>
        <taxon>Helicobacter</taxon>
    </lineage>
</organism>
<protein>
    <recommendedName>
        <fullName evidence="1">Small ribosomal subunit protein uS2</fullName>
    </recommendedName>
    <alternativeName>
        <fullName evidence="2">30S ribosomal protein S2</fullName>
    </alternativeName>
</protein>
<proteinExistence type="inferred from homology"/>
<gene>
    <name evidence="1" type="primary">rpsB</name>
    <name type="ordered locus">Hac_0286</name>
</gene>
<evidence type="ECO:0000255" key="1">
    <source>
        <dbReference type="HAMAP-Rule" id="MF_00291"/>
    </source>
</evidence>
<evidence type="ECO:0000305" key="2"/>
<sequence length="246" mass="28591">MVTMKDLLECGVHFGHQTRRWNPKTKKFIFGVRKNIHIIDLQKTLRYFRYTYNIVRDASAQGKSIMFVGTKKQANETLKEFAESIQVPYVNYRWLGGMLTNFSTIRKSVRKLEIIEEMENSGQIDLLTKKEKLMILRKKEKLDKYLGGVRHMKKIPDMIFVIDVAKEKIAVAEARKLHIPIVAPLDTNCDPDLVDYPIPGNDDAIRSIRLFCKEMSEAILEGRELMQEEIVHADENSEEIEFVSNE</sequence>
<comment type="similarity">
    <text evidence="1">Belongs to the universal ribosomal protein uS2 family.</text>
</comment>
<keyword id="KW-0687">Ribonucleoprotein</keyword>
<keyword id="KW-0689">Ribosomal protein</keyword>
<name>RS2_HELAH</name>